<gene>
    <name evidence="1" type="primary">argH</name>
    <name type="ordered locus">BAA_4890</name>
</gene>
<reference key="1">
    <citation type="submission" date="2009-04" db="EMBL/GenBank/DDBJ databases">
        <title>Genome sequence of Bacillus anthracis A0248.</title>
        <authorList>
            <person name="Dodson R.J."/>
            <person name="Munk A.C."/>
            <person name="Bruce D."/>
            <person name="Detter C."/>
            <person name="Tapia R."/>
            <person name="Sutton G."/>
            <person name="Sims D."/>
            <person name="Brettin T."/>
        </authorList>
    </citation>
    <scope>NUCLEOTIDE SEQUENCE [LARGE SCALE GENOMIC DNA]</scope>
    <source>
        <strain>A0248</strain>
    </source>
</reference>
<protein>
    <recommendedName>
        <fullName evidence="1">Argininosuccinate lyase</fullName>
        <shortName evidence="1">ASAL</shortName>
        <ecNumber evidence="1">4.3.2.1</ecNumber>
    </recommendedName>
    <alternativeName>
        <fullName evidence="1">Arginosuccinase</fullName>
    </alternativeName>
</protein>
<comment type="catalytic activity">
    <reaction evidence="1">
        <text>2-(N(omega)-L-arginino)succinate = fumarate + L-arginine</text>
        <dbReference type="Rhea" id="RHEA:24020"/>
        <dbReference type="ChEBI" id="CHEBI:29806"/>
        <dbReference type="ChEBI" id="CHEBI:32682"/>
        <dbReference type="ChEBI" id="CHEBI:57472"/>
        <dbReference type="EC" id="4.3.2.1"/>
    </reaction>
</comment>
<comment type="pathway">
    <text evidence="1">Amino-acid biosynthesis; L-arginine biosynthesis; L-arginine from L-ornithine and carbamoyl phosphate: step 3/3.</text>
</comment>
<comment type="subcellular location">
    <subcellularLocation>
        <location evidence="1">Cytoplasm</location>
    </subcellularLocation>
</comment>
<comment type="similarity">
    <text evidence="1">Belongs to the lyase 1 family. Argininosuccinate lyase subfamily.</text>
</comment>
<evidence type="ECO:0000255" key="1">
    <source>
        <dbReference type="HAMAP-Rule" id="MF_00006"/>
    </source>
</evidence>
<name>ARLY_BACAA</name>
<sequence length="462" mass="52165">MSKLWGGRFTEEAEAWVEEFGASISFDQQLVNQDINGSIAHVTMLAKQGIVTKEEAEKIKIGLQYLLEEAKQNKLHFSVEAEDIHLNIEKMLMEKIGEVGGKLHTGRSRNDQVATDMHLYLKEKVEHIIKAIKQLQTVLVHQAENNIETIMPGYTHLQRAQPISFAHHILAYFWMLERDVNRYEDSLKRINISPLGAGALAGTTFPIDREYSAELLGFNGIYENSLDAVSDRDFILEFLSNSSMLMMHLSRFCEELILWSSQEFQFIEMSDQYATGSSIMPQKKNPDMAELIRGKTGRVYGNLFSLLTVMKGLPLAYNKDLQEDKEGMFDTVKTVEGCLHIMAGMLETMTVNKEKMGQAVTQDFSNATEIADYLANKGLPFRQAHEIVGKLVLHCTQKGIYLIDVPLATYKEMSALFEEDLYEVLSPYAAVKRRNSAGGTGFEQIEKALEKAKGLTKEAIKN</sequence>
<proteinExistence type="inferred from homology"/>
<feature type="chain" id="PRO_1000116305" description="Argininosuccinate lyase">
    <location>
        <begin position="1"/>
        <end position="462"/>
    </location>
</feature>
<keyword id="KW-0028">Amino-acid biosynthesis</keyword>
<keyword id="KW-0055">Arginine biosynthesis</keyword>
<keyword id="KW-0963">Cytoplasm</keyword>
<keyword id="KW-0456">Lyase</keyword>
<accession>C3PB96</accession>
<organism>
    <name type="scientific">Bacillus anthracis (strain A0248)</name>
    <dbReference type="NCBI Taxonomy" id="592021"/>
    <lineage>
        <taxon>Bacteria</taxon>
        <taxon>Bacillati</taxon>
        <taxon>Bacillota</taxon>
        <taxon>Bacilli</taxon>
        <taxon>Bacillales</taxon>
        <taxon>Bacillaceae</taxon>
        <taxon>Bacillus</taxon>
        <taxon>Bacillus cereus group</taxon>
    </lineage>
</organism>
<dbReference type="EC" id="4.3.2.1" evidence="1"/>
<dbReference type="EMBL" id="CP001598">
    <property type="protein sequence ID" value="ACQ47207.1"/>
    <property type="molecule type" value="Genomic_DNA"/>
</dbReference>
<dbReference type="RefSeq" id="WP_000041275.1">
    <property type="nucleotide sequence ID" value="NC_012659.1"/>
</dbReference>
<dbReference type="SMR" id="C3PB96"/>
<dbReference type="GeneID" id="45024502"/>
<dbReference type="KEGG" id="bai:BAA_4890"/>
<dbReference type="HOGENOM" id="CLU_027272_2_3_9"/>
<dbReference type="UniPathway" id="UPA00068">
    <property type="reaction ID" value="UER00114"/>
</dbReference>
<dbReference type="GO" id="GO:0005829">
    <property type="term" value="C:cytosol"/>
    <property type="evidence" value="ECO:0007669"/>
    <property type="project" value="TreeGrafter"/>
</dbReference>
<dbReference type="GO" id="GO:0004056">
    <property type="term" value="F:argininosuccinate lyase activity"/>
    <property type="evidence" value="ECO:0007669"/>
    <property type="project" value="UniProtKB-UniRule"/>
</dbReference>
<dbReference type="GO" id="GO:0042450">
    <property type="term" value="P:arginine biosynthetic process via ornithine"/>
    <property type="evidence" value="ECO:0007669"/>
    <property type="project" value="InterPro"/>
</dbReference>
<dbReference type="GO" id="GO:0006526">
    <property type="term" value="P:L-arginine biosynthetic process"/>
    <property type="evidence" value="ECO:0007669"/>
    <property type="project" value="UniProtKB-UniRule"/>
</dbReference>
<dbReference type="CDD" id="cd01359">
    <property type="entry name" value="Argininosuccinate_lyase"/>
    <property type="match status" value="1"/>
</dbReference>
<dbReference type="FunFam" id="1.10.275.10:FF:000002">
    <property type="entry name" value="Argininosuccinate lyase"/>
    <property type="match status" value="1"/>
</dbReference>
<dbReference type="FunFam" id="1.10.40.30:FF:000001">
    <property type="entry name" value="Argininosuccinate lyase"/>
    <property type="match status" value="1"/>
</dbReference>
<dbReference type="FunFam" id="1.20.200.10:FF:000006">
    <property type="entry name" value="Argininosuccinate lyase"/>
    <property type="match status" value="1"/>
</dbReference>
<dbReference type="Gene3D" id="1.10.40.30">
    <property type="entry name" value="Fumarase/aspartase (C-terminal domain)"/>
    <property type="match status" value="1"/>
</dbReference>
<dbReference type="Gene3D" id="1.20.200.10">
    <property type="entry name" value="Fumarase/aspartase (Central domain)"/>
    <property type="match status" value="1"/>
</dbReference>
<dbReference type="Gene3D" id="1.10.275.10">
    <property type="entry name" value="Fumarase/aspartase (N-terminal domain)"/>
    <property type="match status" value="1"/>
</dbReference>
<dbReference type="HAMAP" id="MF_00006">
    <property type="entry name" value="Arg_succ_lyase"/>
    <property type="match status" value="1"/>
</dbReference>
<dbReference type="InterPro" id="IPR029419">
    <property type="entry name" value="Arg_succ_lyase_C"/>
</dbReference>
<dbReference type="InterPro" id="IPR009049">
    <property type="entry name" value="Argininosuccinate_lyase"/>
</dbReference>
<dbReference type="InterPro" id="IPR024083">
    <property type="entry name" value="Fumarase/histidase_N"/>
</dbReference>
<dbReference type="InterPro" id="IPR020557">
    <property type="entry name" value="Fumarate_lyase_CS"/>
</dbReference>
<dbReference type="InterPro" id="IPR000362">
    <property type="entry name" value="Fumarate_lyase_fam"/>
</dbReference>
<dbReference type="InterPro" id="IPR022761">
    <property type="entry name" value="Fumarate_lyase_N"/>
</dbReference>
<dbReference type="InterPro" id="IPR008948">
    <property type="entry name" value="L-Aspartase-like"/>
</dbReference>
<dbReference type="NCBIfam" id="TIGR00838">
    <property type="entry name" value="argH"/>
    <property type="match status" value="1"/>
</dbReference>
<dbReference type="PANTHER" id="PTHR43814">
    <property type="entry name" value="ARGININOSUCCINATE LYASE"/>
    <property type="match status" value="1"/>
</dbReference>
<dbReference type="PANTHER" id="PTHR43814:SF1">
    <property type="entry name" value="ARGININOSUCCINATE LYASE"/>
    <property type="match status" value="1"/>
</dbReference>
<dbReference type="Pfam" id="PF14698">
    <property type="entry name" value="ASL_C2"/>
    <property type="match status" value="1"/>
</dbReference>
<dbReference type="Pfam" id="PF00206">
    <property type="entry name" value="Lyase_1"/>
    <property type="match status" value="1"/>
</dbReference>
<dbReference type="PRINTS" id="PR00145">
    <property type="entry name" value="ARGSUCLYASE"/>
</dbReference>
<dbReference type="PRINTS" id="PR00149">
    <property type="entry name" value="FUMRATELYASE"/>
</dbReference>
<dbReference type="SUPFAM" id="SSF48557">
    <property type="entry name" value="L-aspartase-like"/>
    <property type="match status" value="1"/>
</dbReference>
<dbReference type="PROSITE" id="PS00163">
    <property type="entry name" value="FUMARATE_LYASES"/>
    <property type="match status" value="1"/>
</dbReference>